<organism>
    <name type="scientific">Human cytomegalovirus (strain Merlin)</name>
    <name type="common">HHV-5</name>
    <name type="synonym">Human herpesvirus 5</name>
    <dbReference type="NCBI Taxonomy" id="295027"/>
    <lineage>
        <taxon>Viruses</taxon>
        <taxon>Duplodnaviria</taxon>
        <taxon>Heunggongvirae</taxon>
        <taxon>Peploviricota</taxon>
        <taxon>Herviviricetes</taxon>
        <taxon>Herpesvirales</taxon>
        <taxon>Orthoherpesviridae</taxon>
        <taxon>Betaherpesvirinae</taxon>
        <taxon>Cytomegalovirus</taxon>
        <taxon>Cytomegalovirus humanbeta5</taxon>
        <taxon>Human cytomegalovirus</taxon>
    </lineage>
</organism>
<sequence>MQTYSTPLTLIIVTSLFLFTTQGSSSNAVEPTKKPLKLANYRATCEDRTRTLVTRLNTSHHSVVWQRYDIYSRYMRRMPPLCIITDAYKETTHQGGATFTCTRQNLTLYNLTVKDTGVYLLQDQYTGDVEAFYLIIHPRSFCRALETRRCFYPGPGRVVVTDSQEADRAIISDLKRQWSGLSLHCAWVSGLMIFVGALVICFLRSQRIGEQDAEQLRTDLDTEPLLLTVDGDLE</sequence>
<organismHost>
    <name type="scientific">Homo sapiens</name>
    <name type="common">Human</name>
    <dbReference type="NCBI Taxonomy" id="9606"/>
</organismHost>
<proteinExistence type="inferred from homology"/>
<dbReference type="EMBL" id="AY446894">
    <property type="protein sequence ID" value="AAR31565.1"/>
    <property type="molecule type" value="Genomic_DNA"/>
</dbReference>
<dbReference type="RefSeq" id="YP_081459.1">
    <property type="nucleotide sequence ID" value="NC_006273.2"/>
</dbReference>
<dbReference type="DNASU" id="3077515"/>
<dbReference type="GeneID" id="3077515"/>
<dbReference type="KEGG" id="vg:3077515"/>
<dbReference type="Reactome" id="R-HSA-9609690">
    <property type="pathway name" value="HCMV Early Events"/>
</dbReference>
<dbReference type="Reactome" id="R-HSA-9610379">
    <property type="pathway name" value="HCMV Late Events"/>
</dbReference>
<dbReference type="Proteomes" id="UP000000938">
    <property type="component" value="Segment"/>
</dbReference>
<dbReference type="GO" id="GO:0033644">
    <property type="term" value="C:host cell membrane"/>
    <property type="evidence" value="ECO:0007669"/>
    <property type="project" value="UniProtKB-SubCell"/>
</dbReference>
<dbReference type="GO" id="GO:0005886">
    <property type="term" value="C:plasma membrane"/>
    <property type="evidence" value="ECO:0000304"/>
    <property type="project" value="Reactome"/>
</dbReference>
<dbReference type="GO" id="GO:0019031">
    <property type="term" value="C:viral envelope"/>
    <property type="evidence" value="ECO:0000304"/>
    <property type="project" value="Reactome"/>
</dbReference>
<gene>
    <name type="primary">RL11</name>
</gene>
<protein>
    <recommendedName>
        <fullName>Membrane glycoprotein RL11</fullName>
    </recommendedName>
</protein>
<keyword id="KW-1043">Host membrane</keyword>
<keyword id="KW-0472">Membrane</keyword>
<keyword id="KW-1185">Reference proteome</keyword>
<keyword id="KW-0732">Signal</keyword>
<keyword id="KW-0812">Transmembrane</keyword>
<keyword id="KW-1133">Transmembrane helix</keyword>
<comment type="subcellular location">
    <subcellularLocation>
        <location evidence="2">Host membrane</location>
        <topology evidence="2">Single-pass type I membrane protein</topology>
    </subcellularLocation>
</comment>
<feature type="signal peptide" evidence="1">
    <location>
        <begin position="1"/>
        <end position="23"/>
    </location>
</feature>
<feature type="chain" id="PRO_0000418305" description="Membrane glycoprotein RL11">
    <location>
        <begin position="24"/>
        <end position="234"/>
    </location>
</feature>
<feature type="transmembrane region" description="Helical" evidence="1">
    <location>
        <begin position="183"/>
        <end position="203"/>
    </location>
</feature>
<name>RL11_HCMVM</name>
<evidence type="ECO:0000255" key="1"/>
<evidence type="ECO:0000305" key="2"/>
<reference key="1">
    <citation type="journal article" date="2004" name="J. Gen. Virol.">
        <title>Genetic content of wild-type human cytomegalovirus.</title>
        <authorList>
            <person name="Dolan A."/>
            <person name="Cunningham C."/>
            <person name="Hector R.D."/>
            <person name="Hassan-Walker A.F."/>
            <person name="Lee L."/>
            <person name="Addison C."/>
            <person name="Dargan D.J."/>
            <person name="McGeoch D.J."/>
            <person name="Gatherer D."/>
            <person name="Emery V.C."/>
            <person name="Griffiths P.D."/>
            <person name="Sinzger C."/>
            <person name="McSharry B.P."/>
            <person name="Wilkinson G.W.G."/>
            <person name="Davison A.J."/>
        </authorList>
    </citation>
    <scope>NUCLEOTIDE SEQUENCE [LARGE SCALE GENOMIC DNA]</scope>
</reference>
<accession>Q6SWD1</accession>
<accession>D2K3G9</accession>